<keyword id="KW-0158">Chromosome</keyword>
<keyword id="KW-0963">Cytoplasm</keyword>
<keyword id="KW-0238">DNA-binding</keyword>
<keyword id="KW-0488">Methylation</keyword>
<keyword id="KW-1185">Reference proteome</keyword>
<sequence length="59" mass="6852">MAEEILNREYEVEYEGRKYFLRPVKAWVLQPPGKPGVVVALFKLPNGKSIRKVIMRLPP</sequence>
<evidence type="ECO:0000255" key="1">
    <source>
        <dbReference type="HAMAP-Rule" id="MF_01387"/>
    </source>
</evidence>
<proteinExistence type="inferred from homology"/>
<accession>Q8ZX17</accession>
<name>CREN7_PYRAE</name>
<protein>
    <recommendedName>
        <fullName evidence="1">Chromatin protein Cren7</fullName>
    </recommendedName>
</protein>
<reference key="1">
    <citation type="journal article" date="2002" name="Proc. Natl. Acad. Sci. U.S.A.">
        <title>Genome sequence of the hyperthermophilic crenarchaeon Pyrobaculum aerophilum.</title>
        <authorList>
            <person name="Fitz-Gibbon S.T."/>
            <person name="Ladner H."/>
            <person name="Kim U.-J."/>
            <person name="Stetter K.O."/>
            <person name="Simon M.I."/>
            <person name="Miller J.H."/>
        </authorList>
    </citation>
    <scope>NUCLEOTIDE SEQUENCE [LARGE SCALE GENOMIC DNA]</scope>
    <source>
        <strain>ATCC 51768 / DSM 7523 / JCM 9630 / CIP 104966 / NBRC 100827 / IM2</strain>
    </source>
</reference>
<feature type="chain" id="PRO_0000345171" description="Chromatin protein Cren7">
    <location>
        <begin position="1"/>
        <end position="59"/>
    </location>
</feature>
<organism>
    <name type="scientific">Pyrobaculum aerophilum (strain ATCC 51768 / DSM 7523 / JCM 9630 / CIP 104966 / NBRC 100827 / IM2)</name>
    <dbReference type="NCBI Taxonomy" id="178306"/>
    <lineage>
        <taxon>Archaea</taxon>
        <taxon>Thermoproteota</taxon>
        <taxon>Thermoprotei</taxon>
        <taxon>Thermoproteales</taxon>
        <taxon>Thermoproteaceae</taxon>
        <taxon>Pyrobaculum</taxon>
    </lineage>
</organism>
<gene>
    <name evidence="1" type="primary">creN7</name>
    <name type="ordered locus">PAE1516</name>
</gene>
<dbReference type="EMBL" id="AE009441">
    <property type="protein sequence ID" value="AAL63532.1"/>
    <property type="molecule type" value="Genomic_DNA"/>
</dbReference>
<dbReference type="RefSeq" id="WP_011008005.1">
    <property type="nucleotide sequence ID" value="NC_003364.1"/>
</dbReference>
<dbReference type="SMR" id="Q8ZX17"/>
<dbReference type="EnsemblBacteria" id="AAL63532">
    <property type="protein sequence ID" value="AAL63532"/>
    <property type="gene ID" value="PAE1516"/>
</dbReference>
<dbReference type="GeneID" id="1465775"/>
<dbReference type="KEGG" id="pai:PAE1516"/>
<dbReference type="PATRIC" id="fig|178306.9.peg.1120"/>
<dbReference type="eggNOG" id="arCOG04114">
    <property type="taxonomic scope" value="Archaea"/>
</dbReference>
<dbReference type="HOGENOM" id="CLU_192664_0_0_2"/>
<dbReference type="InParanoid" id="Q8ZX17"/>
<dbReference type="Proteomes" id="UP000002439">
    <property type="component" value="Chromosome"/>
</dbReference>
<dbReference type="GO" id="GO:0005694">
    <property type="term" value="C:chromosome"/>
    <property type="evidence" value="ECO:0007669"/>
    <property type="project" value="UniProtKB-SubCell"/>
</dbReference>
<dbReference type="GO" id="GO:0005737">
    <property type="term" value="C:cytoplasm"/>
    <property type="evidence" value="ECO:0007669"/>
    <property type="project" value="UniProtKB-SubCell"/>
</dbReference>
<dbReference type="GO" id="GO:0003690">
    <property type="term" value="F:double-stranded DNA binding"/>
    <property type="evidence" value="ECO:0007669"/>
    <property type="project" value="UniProtKB-UniRule"/>
</dbReference>
<dbReference type="Gene3D" id="2.30.30.610">
    <property type="entry name" value="Chromatin protein Cren7"/>
    <property type="match status" value="1"/>
</dbReference>
<dbReference type="HAMAP" id="MF_01387">
    <property type="entry name" value="Chromatin_Cren7"/>
    <property type="match status" value="1"/>
</dbReference>
<dbReference type="InterPro" id="IPR038647">
    <property type="entry name" value="Cren7_sf"/>
</dbReference>
<dbReference type="InterPro" id="IPR020906">
    <property type="entry name" value="dsDNA-bd_Cren7"/>
</dbReference>
<dbReference type="Pfam" id="PF11520">
    <property type="entry name" value="Cren7"/>
    <property type="match status" value="1"/>
</dbReference>
<comment type="function">
    <text evidence="1">A chromatin protein, binds double-stranded DNA without sequence specificity. Constrains negative DNA supercoils.</text>
</comment>
<comment type="subunit">
    <text evidence="1">Monomer.</text>
</comment>
<comment type="subcellular location">
    <subcellularLocation>
        <location evidence="1">Chromosome</location>
    </subcellularLocation>
    <subcellularLocation>
        <location evidence="1">Cytoplasm</location>
    </subcellularLocation>
</comment>
<comment type="PTM">
    <text evidence="1">Methylated at multiple sites, to varying extents.</text>
</comment>
<comment type="similarity">
    <text evidence="1">Belongs to the Cren7 family.</text>
</comment>